<proteinExistence type="evidence at protein level"/>
<sequence>MPHIRQLCWVSLMCLSSSAFAANVRLQVEGLSGELERNVRAQLSTIQSDEVTPDRRFRARVDDAIREGLKALGYYEPTIDFDLRPPPAKGRQVLLARVSPGEPVRIGGTGVILRGGARTDRDYLDLLKTRPAIGTVLNHGDYDNFKKSLTSVALRKGYFDSEFNKSQLGVALDRHQAFWDIDYNSGERYRFGHVTFEGSQIRDEYLQNLVPFKEGDEYESKDLGELNRRLSATGWFNSVVVAPEFDKARETKVLPLKGVVSPRTENTVETGVGYSTDVGPRVKATWKKPWMNSYGHSLTTSASISAPEQVLDFSYKIPLLKNPLEQYYLVQGGFKRTDLNDTEQDSTTLALSRYWDLSSGWQRAINLRWSLDHFTQGEVTNTTMLLYPGVMISRTRSRGGLMPTWGDSQRYSVDYSNTAWGSDVDFSVIQAQNVWIRTLYDRHRFVMRGNLGWIETGDFDKVPPDLRFFAGGDRSIRGYKYKSISPKDSNGDLKGASKLATGSLEYQYNVTGKWWGAVFVDSGEAVSDIRRSDFKTGAGVGVRWQSPVGPIKLDFAAPIGDKDEHGLQFYIGLGPEL</sequence>
<protein>
    <recommendedName>
        <fullName evidence="4">Translocation and assembly module subunit TamA</fullName>
    </recommendedName>
    <alternativeName>
        <fullName>Autotransporter assembly factor TamA</fullName>
    </alternativeName>
</protein>
<keyword id="KW-0998">Cell outer membrane</keyword>
<keyword id="KW-0472">Membrane</keyword>
<keyword id="KW-1185">Reference proteome</keyword>
<keyword id="KW-0732">Signal</keyword>
<keyword id="KW-0812">Transmembrane</keyword>
<keyword id="KW-1134">Transmembrane beta strand</keyword>
<keyword id="KW-0843">Virulence</keyword>
<evidence type="ECO:0000250" key="1">
    <source>
        <dbReference type="UniProtKB" id="P0ADE4"/>
    </source>
</evidence>
<evidence type="ECO:0000255" key="2">
    <source>
        <dbReference type="PROSITE-ProRule" id="PRU01115"/>
    </source>
</evidence>
<evidence type="ECO:0000269" key="3">
    <source>
    </source>
</evidence>
<evidence type="ECO:0000305" key="4"/>
<name>TAMA_CITRI</name>
<dbReference type="EMBL" id="FN543502">
    <property type="protein sequence ID" value="CBG90000.1"/>
    <property type="molecule type" value="Genomic_DNA"/>
</dbReference>
<dbReference type="RefSeq" id="WP_012907368.1">
    <property type="nucleotide sequence ID" value="NC_013716.1"/>
</dbReference>
<dbReference type="SMR" id="D2TN56"/>
<dbReference type="DIP" id="DIP-59929N"/>
<dbReference type="IntAct" id="D2TN56">
    <property type="interactions" value="1"/>
</dbReference>
<dbReference type="STRING" id="637910.ROD_32811"/>
<dbReference type="KEGG" id="cro:ROD_32811"/>
<dbReference type="eggNOG" id="COG0729">
    <property type="taxonomic scope" value="Bacteria"/>
</dbReference>
<dbReference type="HOGENOM" id="CLU_018618_1_0_6"/>
<dbReference type="OrthoDB" id="9803054at2"/>
<dbReference type="Proteomes" id="UP000001889">
    <property type="component" value="Chromosome"/>
</dbReference>
<dbReference type="GO" id="GO:0009279">
    <property type="term" value="C:cell outer membrane"/>
    <property type="evidence" value="ECO:0007669"/>
    <property type="project" value="UniProtKB-SubCell"/>
</dbReference>
<dbReference type="GO" id="GO:0097347">
    <property type="term" value="C:TAM protein secretion complex"/>
    <property type="evidence" value="ECO:0007669"/>
    <property type="project" value="TreeGrafter"/>
</dbReference>
<dbReference type="GO" id="GO:0009306">
    <property type="term" value="P:protein secretion"/>
    <property type="evidence" value="ECO:0007669"/>
    <property type="project" value="TreeGrafter"/>
</dbReference>
<dbReference type="FunFam" id="2.40.160.50:FF:000003">
    <property type="entry name" value="Outer membrane protein, OMP85 family"/>
    <property type="match status" value="1"/>
</dbReference>
<dbReference type="FunFam" id="3.10.20.310:FF:000008">
    <property type="entry name" value="Outer membrane protein, OMP85 family"/>
    <property type="match status" value="1"/>
</dbReference>
<dbReference type="FunFam" id="3.10.20.310:FF:000009">
    <property type="entry name" value="Outer membrane protein, OMP85 family"/>
    <property type="match status" value="1"/>
</dbReference>
<dbReference type="Gene3D" id="3.10.20.310">
    <property type="entry name" value="membrane protein fhac"/>
    <property type="match status" value="3"/>
</dbReference>
<dbReference type="Gene3D" id="2.40.160.50">
    <property type="entry name" value="membrane protein fhac: a member of the omp85/tpsb transporter family"/>
    <property type="match status" value="1"/>
</dbReference>
<dbReference type="InterPro" id="IPR000184">
    <property type="entry name" value="Bac_surfAg_D15"/>
</dbReference>
<dbReference type="InterPro" id="IPR010827">
    <property type="entry name" value="BamA/TamA_POTRA"/>
</dbReference>
<dbReference type="InterPro" id="IPR039910">
    <property type="entry name" value="D15-like"/>
</dbReference>
<dbReference type="InterPro" id="IPR034746">
    <property type="entry name" value="POTRA"/>
</dbReference>
<dbReference type="InterPro" id="IPR035243">
    <property type="entry name" value="TamA_POTRA_Dom_1"/>
</dbReference>
<dbReference type="PANTHER" id="PTHR12815">
    <property type="entry name" value="SORTING AND ASSEMBLY MACHINERY SAMM50 PROTEIN FAMILY MEMBER"/>
    <property type="match status" value="1"/>
</dbReference>
<dbReference type="PANTHER" id="PTHR12815:SF47">
    <property type="entry name" value="TRANSLOCATION AND ASSEMBLY MODULE SUBUNIT TAMA"/>
    <property type="match status" value="1"/>
</dbReference>
<dbReference type="Pfam" id="PF01103">
    <property type="entry name" value="Omp85"/>
    <property type="match status" value="1"/>
</dbReference>
<dbReference type="Pfam" id="PF07244">
    <property type="entry name" value="POTRA"/>
    <property type="match status" value="1"/>
</dbReference>
<dbReference type="Pfam" id="PF17243">
    <property type="entry name" value="POTRA_TamA_1"/>
    <property type="match status" value="1"/>
</dbReference>
<dbReference type="PROSITE" id="PS51779">
    <property type="entry name" value="POTRA"/>
    <property type="match status" value="1"/>
</dbReference>
<gene>
    <name type="primary">tamA</name>
    <name type="ordered locus">ROD_32811</name>
</gene>
<organism>
    <name type="scientific">Citrobacter rodentium (strain ICC168)</name>
    <name type="common">Citrobacter freundii biotype 4280</name>
    <dbReference type="NCBI Taxonomy" id="637910"/>
    <lineage>
        <taxon>Bacteria</taxon>
        <taxon>Pseudomonadati</taxon>
        <taxon>Pseudomonadota</taxon>
        <taxon>Gammaproteobacteria</taxon>
        <taxon>Enterobacterales</taxon>
        <taxon>Enterobacteriaceae</taxon>
        <taxon>Citrobacter</taxon>
    </lineage>
</organism>
<feature type="signal peptide" evidence="4">
    <location>
        <begin position="1"/>
        <end position="21"/>
    </location>
</feature>
<feature type="chain" id="PRO_5000565833" description="Translocation and assembly module subunit TamA">
    <location>
        <begin position="22"/>
        <end position="577"/>
    </location>
</feature>
<feature type="transmembrane region" description="Beta stranded" evidence="1">
    <location>
        <begin position="265"/>
        <end position="276"/>
    </location>
</feature>
<feature type="transmembrane region" description="Beta stranded" evidence="1">
    <location>
        <begin position="279"/>
        <end position="288"/>
    </location>
</feature>
<feature type="transmembrane region" description="Beta stranded" evidence="1">
    <location>
        <begin position="297"/>
        <end position="306"/>
    </location>
</feature>
<feature type="transmembrane region" description="Beta stranded" evidence="1">
    <location>
        <begin position="309"/>
        <end position="317"/>
    </location>
</feature>
<feature type="transmembrane region" description="Beta stranded" evidence="1">
    <location>
        <begin position="327"/>
        <end position="336"/>
    </location>
</feature>
<feature type="transmembrane region" description="Beta stranded" evidence="1">
    <location>
        <begin position="347"/>
        <end position="356"/>
    </location>
</feature>
<feature type="transmembrane region" description="Beta stranded" evidence="1">
    <location>
        <begin position="361"/>
        <end position="370"/>
    </location>
</feature>
<feature type="transmembrane region" description="Beta stranded" evidence="1">
    <location>
        <begin position="387"/>
        <end position="395"/>
    </location>
</feature>
<feature type="transmembrane region" description="Beta stranded" evidence="1">
    <location>
        <begin position="406"/>
        <end position="415"/>
    </location>
</feature>
<feature type="transmembrane region" description="Beta stranded" evidence="1">
    <location>
        <begin position="428"/>
        <end position="437"/>
    </location>
</feature>
<feature type="transmembrane region" description="Beta stranded" evidence="1">
    <location>
        <begin position="444"/>
        <end position="453"/>
    </location>
</feature>
<feature type="transmembrane region" description="Beta stranded" evidence="1">
    <location>
        <begin position="500"/>
        <end position="508"/>
    </location>
</feature>
<feature type="transmembrane region" description="Beta stranded" evidence="1">
    <location>
        <begin position="514"/>
        <end position="523"/>
    </location>
</feature>
<feature type="transmembrane region" description="Beta stranded" evidence="1">
    <location>
        <begin position="536"/>
        <end position="545"/>
    </location>
</feature>
<feature type="transmembrane region" description="Beta stranded" evidence="1">
    <location>
        <begin position="549"/>
        <end position="557"/>
    </location>
</feature>
<feature type="transmembrane region" description="Beta stranded" evidence="1">
    <location>
        <begin position="568"/>
        <end position="577"/>
    </location>
</feature>
<feature type="domain" description="POTRA" evidence="2">
    <location>
        <begin position="187"/>
        <end position="263"/>
    </location>
</feature>
<reference key="1">
    <citation type="journal article" date="2010" name="J. Bacteriol.">
        <title>The Citrobacter rodentium genome sequence reveals convergent evolution with human pathogenic Escherichia coli.</title>
        <authorList>
            <person name="Petty N.K."/>
            <person name="Bulgin R."/>
            <person name="Crepin V.F."/>
            <person name="Cerdeno-Tarraga A.M."/>
            <person name="Schroeder G.N."/>
            <person name="Quail M.A."/>
            <person name="Lennard N."/>
            <person name="Corton C."/>
            <person name="Barron A."/>
            <person name="Clark L."/>
            <person name="Toribio A.L."/>
            <person name="Parkhill J."/>
            <person name="Dougan G."/>
            <person name="Frankel G."/>
            <person name="Thomson N.R."/>
        </authorList>
    </citation>
    <scope>NUCLEOTIDE SEQUENCE [LARGE SCALE GENOMIC DNA]</scope>
    <source>
        <strain>ICC168</strain>
    </source>
</reference>
<reference key="2">
    <citation type="journal article" date="2012" name="Nat. Struct. Mol. Biol.">
        <title>Discovery of an archetypal protein transport system in bacterial outer membranes.</title>
        <authorList>
            <person name="Selkrig J."/>
            <person name="Mosbahi K."/>
            <person name="Webb C.T."/>
            <person name="Belousoff M.J."/>
            <person name="Perry A.J."/>
            <person name="Wells T.J."/>
            <person name="Morris F."/>
            <person name="Leyton D.L."/>
            <person name="Totsika M."/>
            <person name="Phan M.D."/>
            <person name="Celik N."/>
            <person name="Kelly M."/>
            <person name="Oates C."/>
            <person name="Hartland E.L."/>
            <person name="Robins-Browne R.M."/>
            <person name="Ramarathinam S.H."/>
            <person name="Purcell A.W."/>
            <person name="Schembri M.A."/>
            <person name="Strugnell R.A."/>
            <person name="Henderson I.R."/>
            <person name="Walker D."/>
            <person name="Lithgow T."/>
        </authorList>
    </citation>
    <scope>FUNCTION IN SECRETION OF AUTOTRANSPORTERS</scope>
    <scope>SUBCELLULAR LOCATION</scope>
    <scope>DISRUPTION PHENOTYPE</scope>
    <source>
        <strain>ICC169</strain>
    </source>
</reference>
<comment type="function">
    <text evidence="1 3">Component of the translocation and assembly module (TAM), which facilitates the insertion and assembly of specific beta-barrel proteins into the outer membrane (By similarity). Promotes the secretion across the outer membrane of autotransporters such as p1121 (PubMed:22466966).</text>
</comment>
<comment type="subunit">
    <text evidence="1">Interacts with TamB to form the translocation and assembly module (TAM).</text>
</comment>
<comment type="subcellular location">
    <subcellularLocation>
        <location evidence="3">Cell outer membrane</location>
    </subcellularLocation>
</comment>
<comment type="disruption phenotype">
    <text evidence="3">8-fold reduction in ability to colonize mice in competitive assays with wild-type (PubMed:22466966). The mutant does not express the major autotransporter p1121 on the cell surface (PubMed:22466966).</text>
</comment>
<comment type="similarity">
    <text evidence="4">Belongs to the TamA family.</text>
</comment>
<accession>D2TN56</accession>